<organism>
    <name type="scientific">Nitrobacter vulgaris</name>
    <dbReference type="NCBI Taxonomy" id="29421"/>
    <lineage>
        <taxon>Bacteria</taxon>
        <taxon>Pseudomonadati</taxon>
        <taxon>Pseudomonadota</taxon>
        <taxon>Alphaproteobacteria</taxon>
        <taxon>Hyphomicrobiales</taxon>
        <taxon>Nitrobacteraceae</taxon>
        <taxon>Nitrobacter</taxon>
    </lineage>
</organism>
<reference key="1">
    <citation type="submission" date="1994-01" db="EMBL/GenBank/DDBJ databases">
        <authorList>
            <person name="Strecker M."/>
            <person name="Sickinger E."/>
            <person name="English R.S."/>
            <person name="Shively J.M."/>
            <person name="Bock E."/>
        </authorList>
    </citation>
    <scope>NUCLEOTIDE SEQUENCE [GENOMIC DNA]</scope>
    <source>
        <strain>T3</strain>
    </source>
</reference>
<evidence type="ECO:0000255" key="1">
    <source>
        <dbReference type="HAMAP-Rule" id="MF_00859"/>
    </source>
</evidence>
<dbReference type="EMBL" id="L22885">
    <property type="protein sequence ID" value="AAA25510.1"/>
    <property type="molecule type" value="Genomic_DNA"/>
</dbReference>
<dbReference type="RefSeq" id="WP_011315232.1">
    <property type="nucleotide sequence ID" value="NZ_MWPQ01000039.1"/>
</dbReference>
<dbReference type="SMR" id="Q59614"/>
<dbReference type="STRING" id="29421.B2M20_09245"/>
<dbReference type="OrthoDB" id="9788955at2"/>
<dbReference type="GO" id="GO:0016984">
    <property type="term" value="F:ribulose-bisphosphate carboxylase activity"/>
    <property type="evidence" value="ECO:0007669"/>
    <property type="project" value="UniProtKB-UniRule"/>
</dbReference>
<dbReference type="GO" id="GO:0019253">
    <property type="term" value="P:reductive pentose-phosphate cycle"/>
    <property type="evidence" value="ECO:0007669"/>
    <property type="project" value="UniProtKB-UniRule"/>
</dbReference>
<dbReference type="CDD" id="cd03527">
    <property type="entry name" value="RuBisCO_small"/>
    <property type="match status" value="1"/>
</dbReference>
<dbReference type="Gene3D" id="3.30.190.10">
    <property type="entry name" value="Ribulose bisphosphate carboxylase, small subunit"/>
    <property type="match status" value="1"/>
</dbReference>
<dbReference type="HAMAP" id="MF_00859">
    <property type="entry name" value="RuBisCO_S_bact"/>
    <property type="match status" value="1"/>
</dbReference>
<dbReference type="InterPro" id="IPR024681">
    <property type="entry name" value="RuBisCO_ssu"/>
</dbReference>
<dbReference type="InterPro" id="IPR000894">
    <property type="entry name" value="RuBisCO_ssu_dom"/>
</dbReference>
<dbReference type="InterPro" id="IPR036385">
    <property type="entry name" value="RuBisCO_ssu_sf"/>
</dbReference>
<dbReference type="PANTHER" id="PTHR31262">
    <property type="entry name" value="RIBULOSE BISPHOSPHATE CARBOXYLASE SMALL CHAIN 1, CHLOROPLASTIC"/>
    <property type="match status" value="1"/>
</dbReference>
<dbReference type="Pfam" id="PF00101">
    <property type="entry name" value="RuBisCO_small"/>
    <property type="match status" value="1"/>
</dbReference>
<dbReference type="SMART" id="SM00961">
    <property type="entry name" value="RuBisCO_small"/>
    <property type="match status" value="1"/>
</dbReference>
<dbReference type="SUPFAM" id="SSF55239">
    <property type="entry name" value="RuBisCO, small subunit"/>
    <property type="match status" value="1"/>
</dbReference>
<gene>
    <name evidence="1" type="primary">cbbS</name>
</gene>
<comment type="function">
    <text evidence="1">RuBisCO catalyzes two reactions: the carboxylation of D-ribulose 1,5-bisphosphate, the primary event in carbon dioxide fixation, as well as the oxidative fragmentation of the pentose substrate. Both reactions occur simultaneously and in competition at the same active site. Although the small subunit is not catalytic it is essential for maximal activity.</text>
</comment>
<comment type="subunit">
    <text evidence="1">Heterohexadecamer of 8 large and 8 small subunits.</text>
</comment>
<comment type="miscellaneous">
    <text evidence="1">The basic functional RuBisCO is composed of a large chain homodimer in a 'head-to-tail' conformation. In form I RuBisCO this homodimer is arranged in a barrel-like tetramer with the small subunits forming a tetrameric 'cap' on each end of the 'barrel'.</text>
</comment>
<comment type="similarity">
    <text evidence="1">Belongs to the RuBisCO small chain family.</text>
</comment>
<feature type="chain" id="PRO_0000198616" description="Ribulose bisphosphate carboxylase small subunit">
    <location>
        <begin position="1"/>
        <end position="108"/>
    </location>
</feature>
<keyword id="KW-0113">Calvin cycle</keyword>
<keyword id="KW-0120">Carbon dioxide fixation</keyword>
<sequence>MAVQAYRSLKKYETFSYLPQMTPEQVRRQIAHAIAQGWNPAVEHTEKGTPAKASYWYMWKLPLFGEQSVDAVVAEIEACHREFPDQMVRFVAYDNYAQSQGMAFVVYR</sequence>
<accession>Q59614</accession>
<name>RBS_NITVU</name>
<proteinExistence type="inferred from homology"/>
<protein>
    <recommendedName>
        <fullName evidence="1">Ribulose bisphosphate carboxylase small subunit</fullName>
        <shortName evidence="1">RuBisCO small subunit</shortName>
    </recommendedName>
</protein>